<proteinExistence type="inferred from homology"/>
<comment type="similarity">
    <text evidence="1">Belongs to the universal ribosomal protein uS9 family.</text>
</comment>
<dbReference type="EMBL" id="CP000814">
    <property type="protein sequence ID" value="ABV52982.1"/>
    <property type="molecule type" value="Genomic_DNA"/>
</dbReference>
<dbReference type="RefSeq" id="WP_002851459.1">
    <property type="nucleotide sequence ID" value="NC_009839.1"/>
</dbReference>
<dbReference type="SMR" id="A8FNE5"/>
<dbReference type="KEGG" id="cju:C8J_1384"/>
<dbReference type="HOGENOM" id="CLU_046483_2_1_7"/>
<dbReference type="GO" id="GO:0022627">
    <property type="term" value="C:cytosolic small ribosomal subunit"/>
    <property type="evidence" value="ECO:0007669"/>
    <property type="project" value="TreeGrafter"/>
</dbReference>
<dbReference type="GO" id="GO:0003723">
    <property type="term" value="F:RNA binding"/>
    <property type="evidence" value="ECO:0007669"/>
    <property type="project" value="TreeGrafter"/>
</dbReference>
<dbReference type="GO" id="GO:0003735">
    <property type="term" value="F:structural constituent of ribosome"/>
    <property type="evidence" value="ECO:0007669"/>
    <property type="project" value="InterPro"/>
</dbReference>
<dbReference type="GO" id="GO:0006412">
    <property type="term" value="P:translation"/>
    <property type="evidence" value="ECO:0007669"/>
    <property type="project" value="UniProtKB-UniRule"/>
</dbReference>
<dbReference type="FunFam" id="3.30.230.10:FF:000025">
    <property type="entry name" value="30S ribosomal protein S9"/>
    <property type="match status" value="1"/>
</dbReference>
<dbReference type="Gene3D" id="3.30.230.10">
    <property type="match status" value="1"/>
</dbReference>
<dbReference type="HAMAP" id="MF_00532_B">
    <property type="entry name" value="Ribosomal_uS9_B"/>
    <property type="match status" value="1"/>
</dbReference>
<dbReference type="InterPro" id="IPR020568">
    <property type="entry name" value="Ribosomal_Su5_D2-typ_SF"/>
</dbReference>
<dbReference type="InterPro" id="IPR000754">
    <property type="entry name" value="Ribosomal_uS9"/>
</dbReference>
<dbReference type="InterPro" id="IPR023035">
    <property type="entry name" value="Ribosomal_uS9_bac/plastid"/>
</dbReference>
<dbReference type="InterPro" id="IPR020574">
    <property type="entry name" value="Ribosomal_uS9_CS"/>
</dbReference>
<dbReference type="InterPro" id="IPR014721">
    <property type="entry name" value="Ribsml_uS5_D2-typ_fold_subgr"/>
</dbReference>
<dbReference type="NCBIfam" id="NF001099">
    <property type="entry name" value="PRK00132.1"/>
    <property type="match status" value="1"/>
</dbReference>
<dbReference type="PANTHER" id="PTHR21569">
    <property type="entry name" value="RIBOSOMAL PROTEIN S9"/>
    <property type="match status" value="1"/>
</dbReference>
<dbReference type="PANTHER" id="PTHR21569:SF1">
    <property type="entry name" value="SMALL RIBOSOMAL SUBUNIT PROTEIN US9M"/>
    <property type="match status" value="1"/>
</dbReference>
<dbReference type="Pfam" id="PF00380">
    <property type="entry name" value="Ribosomal_S9"/>
    <property type="match status" value="1"/>
</dbReference>
<dbReference type="SUPFAM" id="SSF54211">
    <property type="entry name" value="Ribosomal protein S5 domain 2-like"/>
    <property type="match status" value="1"/>
</dbReference>
<dbReference type="PROSITE" id="PS00360">
    <property type="entry name" value="RIBOSOMAL_S9"/>
    <property type="match status" value="1"/>
</dbReference>
<organism>
    <name type="scientific">Campylobacter jejuni subsp. jejuni serotype O:6 (strain 81116 / NCTC 11828)</name>
    <dbReference type="NCBI Taxonomy" id="407148"/>
    <lineage>
        <taxon>Bacteria</taxon>
        <taxon>Pseudomonadati</taxon>
        <taxon>Campylobacterota</taxon>
        <taxon>Epsilonproteobacteria</taxon>
        <taxon>Campylobacterales</taxon>
        <taxon>Campylobacteraceae</taxon>
        <taxon>Campylobacter</taxon>
    </lineage>
</organism>
<keyword id="KW-0687">Ribonucleoprotein</keyword>
<keyword id="KW-0689">Ribosomal protein</keyword>
<gene>
    <name evidence="1" type="primary">rpsI</name>
    <name type="ordered locus">C8J_1384</name>
</gene>
<sequence>MATTYATGKRKTAIAKVWVKPGSGKISVNGVDLNTWLGGHEAIKLKVVQPLLVTKQETSMDIKATTLGGGYSAQAEALRHGISRALAAMDADFRALLKPKGLLTRDSRTVERKKYGRRKARRSPQFSKR</sequence>
<reference key="1">
    <citation type="journal article" date="2007" name="J. Bacteriol.">
        <title>The complete genome sequence of Campylobacter jejuni strain 81116 (NCTC11828).</title>
        <authorList>
            <person name="Pearson B.M."/>
            <person name="Gaskin D.J.H."/>
            <person name="Segers R.P.A.M."/>
            <person name="Wells J.M."/>
            <person name="Nuijten P.J.M."/>
            <person name="van Vliet A.H.M."/>
        </authorList>
    </citation>
    <scope>NUCLEOTIDE SEQUENCE [LARGE SCALE GENOMIC DNA]</scope>
    <source>
        <strain>81116 / NCTC 11828</strain>
    </source>
</reference>
<evidence type="ECO:0000255" key="1">
    <source>
        <dbReference type="HAMAP-Rule" id="MF_00532"/>
    </source>
</evidence>
<evidence type="ECO:0000256" key="2">
    <source>
        <dbReference type="SAM" id="MobiDB-lite"/>
    </source>
</evidence>
<evidence type="ECO:0000305" key="3"/>
<feature type="chain" id="PRO_1000072517" description="Small ribosomal subunit protein uS9">
    <location>
        <begin position="1"/>
        <end position="129"/>
    </location>
</feature>
<feature type="region of interest" description="Disordered" evidence="2">
    <location>
        <begin position="107"/>
        <end position="129"/>
    </location>
</feature>
<feature type="compositionally biased region" description="Basic residues" evidence="2">
    <location>
        <begin position="114"/>
        <end position="129"/>
    </location>
</feature>
<protein>
    <recommendedName>
        <fullName evidence="1">Small ribosomal subunit protein uS9</fullName>
    </recommendedName>
    <alternativeName>
        <fullName evidence="3">30S ribosomal protein S9</fullName>
    </alternativeName>
</protein>
<accession>A8FNE5</accession>
<name>RS9_CAMJ8</name>